<name>VM1B1_BOTPA</name>
<evidence type="ECO:0000250" key="1"/>
<evidence type="ECO:0000255" key="2">
    <source>
        <dbReference type="PROSITE-ProRule" id="PRU00276"/>
    </source>
</evidence>
<evidence type="ECO:0000269" key="3">
    <source>
    </source>
</evidence>
<evidence type="ECO:0000305" key="4"/>
<accession>P0C6S0</accession>
<keyword id="KW-0053">Apoptosis</keyword>
<keyword id="KW-0903">Direct protein sequencing</keyword>
<keyword id="KW-1206">Fibrinogenolytic toxin</keyword>
<keyword id="KW-1205">Fibrinolytic toxin</keyword>
<keyword id="KW-1199">Hemostasis impairing toxin</keyword>
<keyword id="KW-0378">Hydrolase</keyword>
<keyword id="KW-0479">Metal-binding</keyword>
<keyword id="KW-0482">Metalloprotease</keyword>
<keyword id="KW-0645">Protease</keyword>
<keyword id="KW-0964">Secreted</keyword>
<keyword id="KW-0800">Toxin</keyword>
<keyword id="KW-0862">Zinc</keyword>
<dbReference type="EC" id="3.4.24.-"/>
<dbReference type="SMR" id="P0C6S0"/>
<dbReference type="MEROPS" id="M12.325"/>
<dbReference type="GO" id="GO:0005576">
    <property type="term" value="C:extracellular region"/>
    <property type="evidence" value="ECO:0007669"/>
    <property type="project" value="UniProtKB-SubCell"/>
</dbReference>
<dbReference type="GO" id="GO:0046872">
    <property type="term" value="F:metal ion binding"/>
    <property type="evidence" value="ECO:0007669"/>
    <property type="project" value="UniProtKB-KW"/>
</dbReference>
<dbReference type="GO" id="GO:0004222">
    <property type="term" value="F:metalloendopeptidase activity"/>
    <property type="evidence" value="ECO:0007669"/>
    <property type="project" value="InterPro"/>
</dbReference>
<dbReference type="GO" id="GO:0090729">
    <property type="term" value="F:toxin activity"/>
    <property type="evidence" value="ECO:0007669"/>
    <property type="project" value="UniProtKB-KW"/>
</dbReference>
<dbReference type="GO" id="GO:0006915">
    <property type="term" value="P:apoptotic process"/>
    <property type="evidence" value="ECO:0007669"/>
    <property type="project" value="UniProtKB-KW"/>
</dbReference>
<dbReference type="GO" id="GO:0006508">
    <property type="term" value="P:proteolysis"/>
    <property type="evidence" value="ECO:0007669"/>
    <property type="project" value="UniProtKB-KW"/>
</dbReference>
<dbReference type="Gene3D" id="3.40.390.10">
    <property type="entry name" value="Collagenase (Catalytic Domain)"/>
    <property type="match status" value="1"/>
</dbReference>
<dbReference type="InterPro" id="IPR024079">
    <property type="entry name" value="MetalloPept_cat_dom_sf"/>
</dbReference>
<dbReference type="InterPro" id="IPR001590">
    <property type="entry name" value="Peptidase_M12B"/>
</dbReference>
<dbReference type="Pfam" id="PF01421">
    <property type="entry name" value="Reprolysin"/>
    <property type="match status" value="1"/>
</dbReference>
<dbReference type="SUPFAM" id="SSF55486">
    <property type="entry name" value="Metalloproteases ('zincins'), catalytic domain"/>
    <property type="match status" value="1"/>
</dbReference>
<sequence>SQIKFKPSYIELAVVADHGMFTKYNSNINTIRIVHEMVNTVDGFFRTITSFGEWRERDIIPRSCIMASTISKHNPQCIINQPI</sequence>
<organism>
    <name type="scientific">Bothrops pauloensis</name>
    <name type="common">Neuwied's lancehead</name>
    <name type="synonym">Bothrops neuwiedi pauloensis</name>
    <dbReference type="NCBI Taxonomy" id="1042543"/>
    <lineage>
        <taxon>Eukaryota</taxon>
        <taxon>Metazoa</taxon>
        <taxon>Chordata</taxon>
        <taxon>Craniata</taxon>
        <taxon>Vertebrata</taxon>
        <taxon>Euteleostomi</taxon>
        <taxon>Lepidosauria</taxon>
        <taxon>Squamata</taxon>
        <taxon>Bifurcata</taxon>
        <taxon>Unidentata</taxon>
        <taxon>Episquamata</taxon>
        <taxon>Toxicofera</taxon>
        <taxon>Serpentes</taxon>
        <taxon>Colubroidea</taxon>
        <taxon>Viperidae</taxon>
        <taxon>Crotalinae</taxon>
        <taxon>Bothrops</taxon>
    </lineage>
</organism>
<protein>
    <recommendedName>
        <fullName>Snake venom metalloproteinase BnP1</fullName>
        <shortName>SVMP</shortName>
        <ecNumber>3.4.24.-</ecNumber>
    </recommendedName>
</protein>
<comment type="function">
    <text evidence="3">This protein is a zinc protease from snake venom that is devoid of significant myotoxic and hemorrhagic activities. It hydrolyzes the Aalpha-chain and more slowly the Bbeta-chain of fibrin and fibrinogen, without affecting the gamma-chains. It induces cell detachment and a apoptosis (anoikis) in endothelial cells.</text>
</comment>
<comment type="cofactor">
    <cofactor evidence="1">
        <name>Zn(2+)</name>
        <dbReference type="ChEBI" id="CHEBI:29105"/>
    </cofactor>
    <text evidence="1">Binds 1 zinc ion per subunit.</text>
</comment>
<comment type="activity regulation">
    <text evidence="3">Inhibited by EDTA.</text>
</comment>
<comment type="subunit">
    <text evidence="3">Monomer.</text>
</comment>
<comment type="subcellular location">
    <subcellularLocation>
        <location>Secreted</location>
    </subcellularLocation>
</comment>
<comment type="tissue specificity">
    <text>Expressed by the venom gland.</text>
</comment>
<comment type="similarity">
    <text evidence="4">Belongs to the venom metalloproteinase (M12B) family. P-I subfamily.</text>
</comment>
<feature type="chain" id="PRO_0000326271" description="Snake venom metalloproteinase BnP1">
    <location>
        <begin position="1"/>
        <end position="83"/>
    </location>
</feature>
<feature type="domain" description="Peptidase M12B" evidence="2">
    <location>
        <begin position="8"/>
        <end position="83"/>
    </location>
</feature>
<feature type="binding site" evidence="1">
    <location>
        <position position="11"/>
    </location>
    <ligand>
        <name>Ca(2+)</name>
        <dbReference type="ChEBI" id="CHEBI:29108"/>
        <label>1</label>
    </ligand>
</feature>
<feature type="binding site" evidence="1">
    <location>
        <position position="77"/>
    </location>
    <ligand>
        <name>Ca(2+)</name>
        <dbReference type="ChEBI" id="CHEBI:29108"/>
        <label>1</label>
    </ligand>
</feature>
<feature type="binding site" evidence="1">
    <location>
        <position position="80"/>
    </location>
    <ligand>
        <name>Ca(2+)</name>
        <dbReference type="ChEBI" id="CHEBI:29108"/>
        <label>1</label>
    </ligand>
</feature>
<feature type="unsure residue" description="I or L">
    <location>
        <position position="28"/>
    </location>
</feature>
<feature type="unsure residue" description="I or L">
    <location>
        <position position="31"/>
    </location>
</feature>
<feature type="unsure residue" description="I or L">
    <location>
        <position position="33"/>
    </location>
</feature>
<feature type="unsure residue" description="I or L">
    <location>
        <position position="48"/>
    </location>
</feature>
<feature type="unsure residue" description="I or L">
    <location>
        <position position="59"/>
    </location>
</feature>
<feature type="unsure residue" description="I or L">
    <location>
        <position position="60"/>
    </location>
</feature>
<feature type="unsure residue" description="I or L">
    <location>
        <position position="65"/>
    </location>
</feature>
<feature type="unsure residue" description="I or L">
    <location>
        <position position="70"/>
    </location>
</feature>
<feature type="unsure residue" description="I or L">
    <location>
        <position position="78"/>
    </location>
</feature>
<feature type="unsure residue" description="I or L">
    <location>
        <position position="79"/>
    </location>
</feature>
<feature type="unsure residue" description="I or L">
    <location>
        <position position="83"/>
    </location>
</feature>
<feature type="non-consecutive residues" evidence="4">
    <location>
        <begin position="32"/>
        <end position="33"/>
    </location>
</feature>
<feature type="non-consecutive residues" evidence="4">
    <location>
        <begin position="46"/>
        <end position="47"/>
    </location>
</feature>
<feature type="non-consecutive residues" evidence="4">
    <location>
        <begin position="62"/>
        <end position="63"/>
    </location>
</feature>
<feature type="non-consecutive residues" evidence="4">
    <location>
        <begin position="72"/>
        <end position="73"/>
    </location>
</feature>
<reference key="1">
    <citation type="journal article" date="2008" name="Toxicon">
        <title>BnP1, a novel P-I metalloproteinase from Bothrops neuwiedi venom: biological effects benchmarking relatively to jararhagin, a P-III SVMP.</title>
        <authorList>
            <person name="Baldo C."/>
            <person name="Tanjoni I."/>
            <person name="Leon I.R."/>
            <person name="Batista I.F.C."/>
            <person name="Della-Casa M.S."/>
            <person name="Clissa P.B."/>
            <person name="Weinlich R."/>
            <person name="Lopes-Ferreira M."/>
            <person name="Lebrun I."/>
            <person name="Amarante-Mendes G.P."/>
            <person name="Rodrigues V.M."/>
            <person name="Perales J."/>
            <person name="Valente R.H."/>
            <person name="Moura-da-Silva A.M."/>
        </authorList>
    </citation>
    <scope>PROTEIN SEQUENCE</scope>
    <scope>IDENTIFICATION BY MASS SPECTROMETRY</scope>
    <scope>FUNCTION</scope>
    <scope>ACTIVITY REGULATION</scope>
    <scope>SUBUNIT</scope>
    <source>
        <tissue>Venom</tissue>
    </source>
</reference>
<proteinExistence type="evidence at protein level"/>